<proteinExistence type="inferred from homology"/>
<accession>A2BTT9</accession>
<dbReference type="EC" id="6.3.4.5" evidence="1"/>
<dbReference type="EMBL" id="CP000551">
    <property type="protein sequence ID" value="ABM71200.1"/>
    <property type="molecule type" value="Genomic_DNA"/>
</dbReference>
<dbReference type="RefSeq" id="WP_011819317.1">
    <property type="nucleotide sequence ID" value="NC_008816.1"/>
</dbReference>
<dbReference type="SMR" id="A2BTT9"/>
<dbReference type="STRING" id="146891.A9601_19171"/>
<dbReference type="KEGG" id="pmb:A9601_19171"/>
<dbReference type="eggNOG" id="COG0137">
    <property type="taxonomic scope" value="Bacteria"/>
</dbReference>
<dbReference type="HOGENOM" id="CLU_032784_4_2_3"/>
<dbReference type="OrthoDB" id="9801641at2"/>
<dbReference type="UniPathway" id="UPA00068">
    <property type="reaction ID" value="UER00113"/>
</dbReference>
<dbReference type="Proteomes" id="UP000002590">
    <property type="component" value="Chromosome"/>
</dbReference>
<dbReference type="GO" id="GO:0005737">
    <property type="term" value="C:cytoplasm"/>
    <property type="evidence" value="ECO:0007669"/>
    <property type="project" value="UniProtKB-SubCell"/>
</dbReference>
<dbReference type="GO" id="GO:0004055">
    <property type="term" value="F:argininosuccinate synthase activity"/>
    <property type="evidence" value="ECO:0007669"/>
    <property type="project" value="UniProtKB-UniRule"/>
</dbReference>
<dbReference type="GO" id="GO:0005524">
    <property type="term" value="F:ATP binding"/>
    <property type="evidence" value="ECO:0007669"/>
    <property type="project" value="UniProtKB-UniRule"/>
</dbReference>
<dbReference type="GO" id="GO:0000053">
    <property type="term" value="P:argininosuccinate metabolic process"/>
    <property type="evidence" value="ECO:0007669"/>
    <property type="project" value="TreeGrafter"/>
</dbReference>
<dbReference type="GO" id="GO:0006526">
    <property type="term" value="P:L-arginine biosynthetic process"/>
    <property type="evidence" value="ECO:0007669"/>
    <property type="project" value="UniProtKB-UniRule"/>
</dbReference>
<dbReference type="GO" id="GO:0000050">
    <property type="term" value="P:urea cycle"/>
    <property type="evidence" value="ECO:0007669"/>
    <property type="project" value="TreeGrafter"/>
</dbReference>
<dbReference type="CDD" id="cd01999">
    <property type="entry name" value="ASS"/>
    <property type="match status" value="1"/>
</dbReference>
<dbReference type="FunFam" id="3.40.50.620:FF:000019">
    <property type="entry name" value="Argininosuccinate synthase"/>
    <property type="match status" value="1"/>
</dbReference>
<dbReference type="FunFam" id="3.90.1260.10:FF:000007">
    <property type="entry name" value="Argininosuccinate synthase"/>
    <property type="match status" value="1"/>
</dbReference>
<dbReference type="Gene3D" id="3.90.1260.10">
    <property type="entry name" value="Argininosuccinate synthetase, chain A, domain 2"/>
    <property type="match status" value="1"/>
</dbReference>
<dbReference type="Gene3D" id="3.40.50.620">
    <property type="entry name" value="HUPs"/>
    <property type="match status" value="1"/>
</dbReference>
<dbReference type="Gene3D" id="1.20.5.470">
    <property type="entry name" value="Single helix bin"/>
    <property type="match status" value="1"/>
</dbReference>
<dbReference type="HAMAP" id="MF_00005">
    <property type="entry name" value="Arg_succ_synth_type1"/>
    <property type="match status" value="1"/>
</dbReference>
<dbReference type="InterPro" id="IPR048268">
    <property type="entry name" value="Arginosuc_syn_C"/>
</dbReference>
<dbReference type="InterPro" id="IPR048267">
    <property type="entry name" value="Arginosuc_syn_N"/>
</dbReference>
<dbReference type="InterPro" id="IPR001518">
    <property type="entry name" value="Arginosuc_synth"/>
</dbReference>
<dbReference type="InterPro" id="IPR018223">
    <property type="entry name" value="Arginosuc_synth_CS"/>
</dbReference>
<dbReference type="InterPro" id="IPR023434">
    <property type="entry name" value="Arginosuc_synth_type_1_subfam"/>
</dbReference>
<dbReference type="InterPro" id="IPR024074">
    <property type="entry name" value="AS_cat/multimer_dom_body"/>
</dbReference>
<dbReference type="InterPro" id="IPR014729">
    <property type="entry name" value="Rossmann-like_a/b/a_fold"/>
</dbReference>
<dbReference type="NCBIfam" id="TIGR00032">
    <property type="entry name" value="argG"/>
    <property type="match status" value="1"/>
</dbReference>
<dbReference type="NCBIfam" id="NF001770">
    <property type="entry name" value="PRK00509.1"/>
    <property type="match status" value="1"/>
</dbReference>
<dbReference type="PANTHER" id="PTHR11587">
    <property type="entry name" value="ARGININOSUCCINATE SYNTHASE"/>
    <property type="match status" value="1"/>
</dbReference>
<dbReference type="PANTHER" id="PTHR11587:SF2">
    <property type="entry name" value="ARGININOSUCCINATE SYNTHASE"/>
    <property type="match status" value="1"/>
</dbReference>
<dbReference type="Pfam" id="PF20979">
    <property type="entry name" value="Arginosuc_syn_C"/>
    <property type="match status" value="1"/>
</dbReference>
<dbReference type="Pfam" id="PF00764">
    <property type="entry name" value="Arginosuc_synth"/>
    <property type="match status" value="1"/>
</dbReference>
<dbReference type="SUPFAM" id="SSF52402">
    <property type="entry name" value="Adenine nucleotide alpha hydrolases-like"/>
    <property type="match status" value="1"/>
</dbReference>
<dbReference type="SUPFAM" id="SSF69864">
    <property type="entry name" value="Argininosuccinate synthetase, C-terminal domain"/>
    <property type="match status" value="1"/>
</dbReference>
<dbReference type="PROSITE" id="PS00564">
    <property type="entry name" value="ARGININOSUCCIN_SYN_1"/>
    <property type="match status" value="1"/>
</dbReference>
<dbReference type="PROSITE" id="PS00565">
    <property type="entry name" value="ARGININOSUCCIN_SYN_2"/>
    <property type="match status" value="1"/>
</dbReference>
<keyword id="KW-0028">Amino-acid biosynthesis</keyword>
<keyword id="KW-0055">Arginine biosynthesis</keyword>
<keyword id="KW-0067">ATP-binding</keyword>
<keyword id="KW-0963">Cytoplasm</keyword>
<keyword id="KW-0436">Ligase</keyword>
<keyword id="KW-0547">Nucleotide-binding</keyword>
<gene>
    <name evidence="1" type="primary">argG</name>
    <name type="ordered locus">A9601_19171</name>
</gene>
<evidence type="ECO:0000255" key="1">
    <source>
        <dbReference type="HAMAP-Rule" id="MF_00005"/>
    </source>
</evidence>
<comment type="catalytic activity">
    <reaction evidence="1">
        <text>L-citrulline + L-aspartate + ATP = 2-(N(omega)-L-arginino)succinate + AMP + diphosphate + H(+)</text>
        <dbReference type="Rhea" id="RHEA:10932"/>
        <dbReference type="ChEBI" id="CHEBI:15378"/>
        <dbReference type="ChEBI" id="CHEBI:29991"/>
        <dbReference type="ChEBI" id="CHEBI:30616"/>
        <dbReference type="ChEBI" id="CHEBI:33019"/>
        <dbReference type="ChEBI" id="CHEBI:57472"/>
        <dbReference type="ChEBI" id="CHEBI:57743"/>
        <dbReference type="ChEBI" id="CHEBI:456215"/>
        <dbReference type="EC" id="6.3.4.5"/>
    </reaction>
</comment>
<comment type="pathway">
    <text evidence="1">Amino-acid biosynthesis; L-arginine biosynthesis; L-arginine from L-ornithine and carbamoyl phosphate: step 2/3.</text>
</comment>
<comment type="subunit">
    <text evidence="1">Homotetramer.</text>
</comment>
<comment type="subcellular location">
    <subcellularLocation>
        <location evidence="1">Cytoplasm</location>
    </subcellularLocation>
</comment>
<comment type="similarity">
    <text evidence="1">Belongs to the argininosuccinate synthase family. Type 1 subfamily.</text>
</comment>
<protein>
    <recommendedName>
        <fullName evidence="1">Argininosuccinate synthase</fullName>
        <ecNumber evidence="1">6.3.4.5</ecNumber>
    </recommendedName>
    <alternativeName>
        <fullName evidence="1">Citrulline--aspartate ligase</fullName>
    </alternativeName>
</protein>
<sequence>MQQLKKVVLAYSGGVDTSVCIPYLKNEYGISEVVTFVADLGQGEDLELVRQKALNSGASKSIVGNLVNSFVERYAFPAIRANALYLDKYPLSTALARPLIAENLVNIAREINADAVAHGCTGKGNDQVRFDLAINALGPDLKIITPAREWNMSREEAILYGEKFGIPAPVSKKSPYSIDVNLLGRSIEAGILEDPMQEAPEDIFSMTSSVNNSPDSHQDIEIVFKNGFPVGINDQFLTPVEIIQRANNLAGKHGFGRIDMIEDRVVGIKSREIYETPGLLLLIKAHKELESITLNPDVIDFKGMVEKKWGQLVYQGFWFGPLKESLDAFISSTQTSVNGRVKIRLYKGNAIVIGRMSENNSLYREDLATYSKDDVFNHSLAEGFIYMWGMSNKIWAELNSKTKD</sequence>
<name>ASSY_PROMS</name>
<feature type="chain" id="PRO_1000000421" description="Argininosuccinate synthase">
    <location>
        <begin position="1"/>
        <end position="404"/>
    </location>
</feature>
<feature type="binding site" evidence="1">
    <location>
        <begin position="10"/>
        <end position="18"/>
    </location>
    <ligand>
        <name>ATP</name>
        <dbReference type="ChEBI" id="CHEBI:30616"/>
    </ligand>
</feature>
<feature type="binding site" evidence="1">
    <location>
        <position position="38"/>
    </location>
    <ligand>
        <name>ATP</name>
        <dbReference type="ChEBI" id="CHEBI:30616"/>
    </ligand>
</feature>
<feature type="binding site" evidence="1">
    <location>
        <position position="89"/>
    </location>
    <ligand>
        <name>L-citrulline</name>
        <dbReference type="ChEBI" id="CHEBI:57743"/>
    </ligand>
</feature>
<feature type="binding site" evidence="1">
    <location>
        <position position="119"/>
    </location>
    <ligand>
        <name>ATP</name>
        <dbReference type="ChEBI" id="CHEBI:30616"/>
    </ligand>
</feature>
<feature type="binding site" evidence="1">
    <location>
        <position position="121"/>
    </location>
    <ligand>
        <name>L-aspartate</name>
        <dbReference type="ChEBI" id="CHEBI:29991"/>
    </ligand>
</feature>
<feature type="binding site" evidence="1">
    <location>
        <position position="125"/>
    </location>
    <ligand>
        <name>L-aspartate</name>
        <dbReference type="ChEBI" id="CHEBI:29991"/>
    </ligand>
</feature>
<feature type="binding site" evidence="1">
    <location>
        <position position="125"/>
    </location>
    <ligand>
        <name>L-citrulline</name>
        <dbReference type="ChEBI" id="CHEBI:57743"/>
    </ligand>
</feature>
<feature type="binding site" evidence="1">
    <location>
        <position position="126"/>
    </location>
    <ligand>
        <name>L-aspartate</name>
        <dbReference type="ChEBI" id="CHEBI:29991"/>
    </ligand>
</feature>
<feature type="binding site" evidence="1">
    <location>
        <position position="129"/>
    </location>
    <ligand>
        <name>L-citrulline</name>
        <dbReference type="ChEBI" id="CHEBI:57743"/>
    </ligand>
</feature>
<feature type="binding site" evidence="1">
    <location>
        <position position="177"/>
    </location>
    <ligand>
        <name>L-citrulline</name>
        <dbReference type="ChEBI" id="CHEBI:57743"/>
    </ligand>
</feature>
<feature type="binding site" evidence="1">
    <location>
        <position position="186"/>
    </location>
    <ligand>
        <name>L-citrulline</name>
        <dbReference type="ChEBI" id="CHEBI:57743"/>
    </ligand>
</feature>
<feature type="binding site" evidence="1">
    <location>
        <position position="262"/>
    </location>
    <ligand>
        <name>L-citrulline</name>
        <dbReference type="ChEBI" id="CHEBI:57743"/>
    </ligand>
</feature>
<feature type="binding site" evidence="1">
    <location>
        <position position="274"/>
    </location>
    <ligand>
        <name>L-citrulline</name>
        <dbReference type="ChEBI" id="CHEBI:57743"/>
    </ligand>
</feature>
<organism>
    <name type="scientific">Prochlorococcus marinus (strain AS9601)</name>
    <dbReference type="NCBI Taxonomy" id="146891"/>
    <lineage>
        <taxon>Bacteria</taxon>
        <taxon>Bacillati</taxon>
        <taxon>Cyanobacteriota</taxon>
        <taxon>Cyanophyceae</taxon>
        <taxon>Synechococcales</taxon>
        <taxon>Prochlorococcaceae</taxon>
        <taxon>Prochlorococcus</taxon>
    </lineage>
</organism>
<reference key="1">
    <citation type="journal article" date="2007" name="PLoS Genet.">
        <title>Patterns and implications of gene gain and loss in the evolution of Prochlorococcus.</title>
        <authorList>
            <person name="Kettler G.C."/>
            <person name="Martiny A.C."/>
            <person name="Huang K."/>
            <person name="Zucker J."/>
            <person name="Coleman M.L."/>
            <person name="Rodrigue S."/>
            <person name="Chen F."/>
            <person name="Lapidus A."/>
            <person name="Ferriera S."/>
            <person name="Johnson J."/>
            <person name="Steglich C."/>
            <person name="Church G.M."/>
            <person name="Richardson P."/>
            <person name="Chisholm S.W."/>
        </authorList>
    </citation>
    <scope>NUCLEOTIDE SEQUENCE [LARGE SCALE GENOMIC DNA]</scope>
    <source>
        <strain>AS9601</strain>
    </source>
</reference>